<sequence length="253" mass="29305">MVSSFTSAPRSGFYYFAQGWKLVSQPGIRRFVILPLLVNILLMGGAFWWLFTQLDVWIPTLMSYVPDWLQWLSYLLWPLAVISVLLVFGYFFSTIANWIAAPFNGLLAEQLEARLTGATPPDTGIFGIMKDVPRIMKREWQKFAWYLPRAIVLLILYFIPGIGQTVAPVLWFLFSAWMLAIQYCDYPFDNHKVPFKEMRTALRTRKITNMQFGALTSLFTMIPLLNLFIMPVAVCGATAMWVDCYRDKHAMWR</sequence>
<organism>
    <name type="scientific">Escherichia coli O17:K52:H18 (strain UMN026 / ExPEC)</name>
    <dbReference type="NCBI Taxonomy" id="585056"/>
    <lineage>
        <taxon>Bacteria</taxon>
        <taxon>Pseudomonadati</taxon>
        <taxon>Pseudomonadota</taxon>
        <taxon>Gammaproteobacteria</taxon>
        <taxon>Enterobacterales</taxon>
        <taxon>Enterobacteriaceae</taxon>
        <taxon>Escherichia</taxon>
    </lineage>
</organism>
<comment type="function">
    <text evidence="1">High affinity, high specificity proton-dependent sulfate transporter, which mediates sulfate uptake. Provides the sulfur source for the cysteine synthesis pathway.</text>
</comment>
<comment type="subcellular location">
    <subcellularLocation>
        <location evidence="1">Cell inner membrane</location>
        <topology evidence="1">Multi-pass membrane protein</topology>
    </subcellularLocation>
</comment>
<comment type="similarity">
    <text evidence="1">Belongs to the CysZ family.</text>
</comment>
<proteinExistence type="inferred from homology"/>
<reference key="1">
    <citation type="journal article" date="2009" name="PLoS Genet.">
        <title>Organised genome dynamics in the Escherichia coli species results in highly diverse adaptive paths.</title>
        <authorList>
            <person name="Touchon M."/>
            <person name="Hoede C."/>
            <person name="Tenaillon O."/>
            <person name="Barbe V."/>
            <person name="Baeriswyl S."/>
            <person name="Bidet P."/>
            <person name="Bingen E."/>
            <person name="Bonacorsi S."/>
            <person name="Bouchier C."/>
            <person name="Bouvet O."/>
            <person name="Calteau A."/>
            <person name="Chiapello H."/>
            <person name="Clermont O."/>
            <person name="Cruveiller S."/>
            <person name="Danchin A."/>
            <person name="Diard M."/>
            <person name="Dossat C."/>
            <person name="Karoui M.E."/>
            <person name="Frapy E."/>
            <person name="Garry L."/>
            <person name="Ghigo J.M."/>
            <person name="Gilles A.M."/>
            <person name="Johnson J."/>
            <person name="Le Bouguenec C."/>
            <person name="Lescat M."/>
            <person name="Mangenot S."/>
            <person name="Martinez-Jehanne V."/>
            <person name="Matic I."/>
            <person name="Nassif X."/>
            <person name="Oztas S."/>
            <person name="Petit M.A."/>
            <person name="Pichon C."/>
            <person name="Rouy Z."/>
            <person name="Ruf C.S."/>
            <person name="Schneider D."/>
            <person name="Tourret J."/>
            <person name="Vacherie B."/>
            <person name="Vallenet D."/>
            <person name="Medigue C."/>
            <person name="Rocha E.P.C."/>
            <person name="Denamur E."/>
        </authorList>
    </citation>
    <scope>NUCLEOTIDE SEQUENCE [LARGE SCALE GENOMIC DNA]</scope>
    <source>
        <strain>UMN026 / ExPEC</strain>
    </source>
</reference>
<feature type="chain" id="PRO_1000125497" description="Sulfate transporter CysZ">
    <location>
        <begin position="1"/>
        <end position="253"/>
    </location>
</feature>
<feature type="transmembrane region" description="Helical" evidence="1">
    <location>
        <begin position="31"/>
        <end position="51"/>
    </location>
</feature>
<feature type="transmembrane region" description="Helical" evidence="1">
    <location>
        <begin position="75"/>
        <end position="95"/>
    </location>
</feature>
<feature type="transmembrane region" description="Helical" evidence="1">
    <location>
        <begin position="151"/>
        <end position="171"/>
    </location>
</feature>
<feature type="transmembrane region" description="Helical" evidence="1">
    <location>
        <begin position="222"/>
        <end position="242"/>
    </location>
</feature>
<accession>B7N604</accession>
<keyword id="KW-0028">Amino-acid biosynthesis</keyword>
<keyword id="KW-0997">Cell inner membrane</keyword>
<keyword id="KW-1003">Cell membrane</keyword>
<keyword id="KW-0198">Cysteine biosynthesis</keyword>
<keyword id="KW-0472">Membrane</keyword>
<keyword id="KW-0764">Sulfate transport</keyword>
<keyword id="KW-0812">Transmembrane</keyword>
<keyword id="KW-1133">Transmembrane helix</keyword>
<keyword id="KW-0813">Transport</keyword>
<name>CYSZ_ECOLU</name>
<gene>
    <name evidence="1" type="primary">cysZ</name>
    <name type="ordered locus">ECUMN_2735</name>
</gene>
<protein>
    <recommendedName>
        <fullName evidence="1">Sulfate transporter CysZ</fullName>
    </recommendedName>
</protein>
<dbReference type="EMBL" id="CU928163">
    <property type="protein sequence ID" value="CAR13913.1"/>
    <property type="molecule type" value="Genomic_DNA"/>
</dbReference>
<dbReference type="RefSeq" id="WP_000254839.1">
    <property type="nucleotide sequence ID" value="NC_011751.1"/>
</dbReference>
<dbReference type="RefSeq" id="YP_002413440.1">
    <property type="nucleotide sequence ID" value="NC_011751.1"/>
</dbReference>
<dbReference type="SMR" id="B7N604"/>
<dbReference type="STRING" id="585056.ECUMN_2735"/>
<dbReference type="GeneID" id="93774718"/>
<dbReference type="KEGG" id="eum:ECUMN_2735"/>
<dbReference type="PATRIC" id="fig|585056.7.peg.2916"/>
<dbReference type="HOGENOM" id="CLU_070331_1_0_6"/>
<dbReference type="Proteomes" id="UP000007097">
    <property type="component" value="Chromosome"/>
</dbReference>
<dbReference type="GO" id="GO:0005886">
    <property type="term" value="C:plasma membrane"/>
    <property type="evidence" value="ECO:0007669"/>
    <property type="project" value="UniProtKB-SubCell"/>
</dbReference>
<dbReference type="GO" id="GO:0009675">
    <property type="term" value="F:high-affinity sulfate:proton symporter activity"/>
    <property type="evidence" value="ECO:0007669"/>
    <property type="project" value="TreeGrafter"/>
</dbReference>
<dbReference type="GO" id="GO:0019344">
    <property type="term" value="P:cysteine biosynthetic process"/>
    <property type="evidence" value="ECO:0007669"/>
    <property type="project" value="UniProtKB-UniRule"/>
</dbReference>
<dbReference type="GO" id="GO:0000103">
    <property type="term" value="P:sulfate assimilation"/>
    <property type="evidence" value="ECO:0007669"/>
    <property type="project" value="InterPro"/>
</dbReference>
<dbReference type="HAMAP" id="MF_00468">
    <property type="entry name" value="CysZ"/>
    <property type="match status" value="1"/>
</dbReference>
<dbReference type="InterPro" id="IPR050480">
    <property type="entry name" value="CysZ_sulfate_transptr"/>
</dbReference>
<dbReference type="InterPro" id="IPR022985">
    <property type="entry name" value="Sulfate_CysZ"/>
</dbReference>
<dbReference type="NCBIfam" id="NF003433">
    <property type="entry name" value="PRK04949.1"/>
    <property type="match status" value="1"/>
</dbReference>
<dbReference type="PANTHER" id="PTHR37468">
    <property type="entry name" value="SULFATE TRANSPORTER CYSZ"/>
    <property type="match status" value="1"/>
</dbReference>
<dbReference type="PANTHER" id="PTHR37468:SF1">
    <property type="entry name" value="SULFATE TRANSPORTER CYSZ"/>
    <property type="match status" value="1"/>
</dbReference>
<dbReference type="Pfam" id="PF07264">
    <property type="entry name" value="EI24"/>
    <property type="match status" value="1"/>
</dbReference>
<evidence type="ECO:0000255" key="1">
    <source>
        <dbReference type="HAMAP-Rule" id="MF_00468"/>
    </source>
</evidence>